<dbReference type="EMBL" id="AE002098">
    <property type="protein sequence ID" value="AAF40617.1"/>
    <property type="molecule type" value="Genomic_DNA"/>
</dbReference>
<dbReference type="PIR" id="A81233">
    <property type="entry name" value="A81233"/>
</dbReference>
<dbReference type="RefSeq" id="NP_273217.1">
    <property type="nucleotide sequence ID" value="NC_003112.2"/>
</dbReference>
<dbReference type="RefSeq" id="WP_002215445.1">
    <property type="nucleotide sequence ID" value="NC_003112.2"/>
</dbReference>
<dbReference type="SMR" id="P66577"/>
<dbReference type="FunCoup" id="P66577">
    <property type="interactions" value="642"/>
</dbReference>
<dbReference type="STRING" id="122586.NMB0159"/>
<dbReference type="PaxDb" id="122586-NMB0159"/>
<dbReference type="GeneID" id="93387234"/>
<dbReference type="KEGG" id="nme:NMB0159"/>
<dbReference type="PATRIC" id="fig|122586.8.peg.200"/>
<dbReference type="HOGENOM" id="CLU_065898_2_2_4"/>
<dbReference type="InParanoid" id="P66577"/>
<dbReference type="OrthoDB" id="9809045at2"/>
<dbReference type="Proteomes" id="UP000000425">
    <property type="component" value="Chromosome"/>
</dbReference>
<dbReference type="GO" id="GO:0022627">
    <property type="term" value="C:cytosolic small ribosomal subunit"/>
    <property type="evidence" value="ECO:0000318"/>
    <property type="project" value="GO_Central"/>
</dbReference>
<dbReference type="GO" id="GO:0019843">
    <property type="term" value="F:rRNA binding"/>
    <property type="evidence" value="ECO:0007669"/>
    <property type="project" value="UniProtKB-UniRule"/>
</dbReference>
<dbReference type="GO" id="GO:0003735">
    <property type="term" value="F:structural constituent of ribosome"/>
    <property type="evidence" value="ECO:0000318"/>
    <property type="project" value="GO_Central"/>
</dbReference>
<dbReference type="GO" id="GO:0006412">
    <property type="term" value="P:translation"/>
    <property type="evidence" value="ECO:0000318"/>
    <property type="project" value="GO_Central"/>
</dbReference>
<dbReference type="FunFam" id="3.30.160.20:FF:000001">
    <property type="entry name" value="30S ribosomal protein S5"/>
    <property type="match status" value="1"/>
</dbReference>
<dbReference type="FunFam" id="3.30.230.10:FF:000002">
    <property type="entry name" value="30S ribosomal protein S5"/>
    <property type="match status" value="1"/>
</dbReference>
<dbReference type="Gene3D" id="3.30.160.20">
    <property type="match status" value="1"/>
</dbReference>
<dbReference type="Gene3D" id="3.30.230.10">
    <property type="match status" value="1"/>
</dbReference>
<dbReference type="HAMAP" id="MF_01307_B">
    <property type="entry name" value="Ribosomal_uS5_B"/>
    <property type="match status" value="1"/>
</dbReference>
<dbReference type="InterPro" id="IPR020568">
    <property type="entry name" value="Ribosomal_Su5_D2-typ_SF"/>
</dbReference>
<dbReference type="InterPro" id="IPR000851">
    <property type="entry name" value="Ribosomal_uS5"/>
</dbReference>
<dbReference type="InterPro" id="IPR005712">
    <property type="entry name" value="Ribosomal_uS5_bac-type"/>
</dbReference>
<dbReference type="InterPro" id="IPR005324">
    <property type="entry name" value="Ribosomal_uS5_C"/>
</dbReference>
<dbReference type="InterPro" id="IPR013810">
    <property type="entry name" value="Ribosomal_uS5_N"/>
</dbReference>
<dbReference type="InterPro" id="IPR018192">
    <property type="entry name" value="Ribosomal_uS5_N_CS"/>
</dbReference>
<dbReference type="InterPro" id="IPR014721">
    <property type="entry name" value="Ribsml_uS5_D2-typ_fold_subgr"/>
</dbReference>
<dbReference type="NCBIfam" id="TIGR01021">
    <property type="entry name" value="rpsE_bact"/>
    <property type="match status" value="1"/>
</dbReference>
<dbReference type="PANTHER" id="PTHR48277">
    <property type="entry name" value="MITOCHONDRIAL RIBOSOMAL PROTEIN S5"/>
    <property type="match status" value="1"/>
</dbReference>
<dbReference type="PANTHER" id="PTHR48277:SF1">
    <property type="entry name" value="MITOCHONDRIAL RIBOSOMAL PROTEIN S5"/>
    <property type="match status" value="1"/>
</dbReference>
<dbReference type="Pfam" id="PF00333">
    <property type="entry name" value="Ribosomal_S5"/>
    <property type="match status" value="1"/>
</dbReference>
<dbReference type="Pfam" id="PF03719">
    <property type="entry name" value="Ribosomal_S5_C"/>
    <property type="match status" value="1"/>
</dbReference>
<dbReference type="SUPFAM" id="SSF54768">
    <property type="entry name" value="dsRNA-binding domain-like"/>
    <property type="match status" value="1"/>
</dbReference>
<dbReference type="SUPFAM" id="SSF54211">
    <property type="entry name" value="Ribosomal protein S5 domain 2-like"/>
    <property type="match status" value="1"/>
</dbReference>
<dbReference type="PROSITE" id="PS00585">
    <property type="entry name" value="RIBOSOMAL_S5"/>
    <property type="match status" value="1"/>
</dbReference>
<dbReference type="PROSITE" id="PS50881">
    <property type="entry name" value="S5_DSRBD"/>
    <property type="match status" value="1"/>
</dbReference>
<proteinExistence type="inferred from homology"/>
<protein>
    <recommendedName>
        <fullName evidence="1">Small ribosomal subunit protein uS5</fullName>
    </recommendedName>
    <alternativeName>
        <fullName evidence="2">30S ribosomal protein S5</fullName>
    </alternativeName>
</protein>
<reference key="1">
    <citation type="journal article" date="2000" name="Science">
        <title>Complete genome sequence of Neisseria meningitidis serogroup B strain MC58.</title>
        <authorList>
            <person name="Tettelin H."/>
            <person name="Saunders N.J."/>
            <person name="Heidelberg J.F."/>
            <person name="Jeffries A.C."/>
            <person name="Nelson K.E."/>
            <person name="Eisen J.A."/>
            <person name="Ketchum K.A."/>
            <person name="Hood D.W."/>
            <person name="Peden J.F."/>
            <person name="Dodson R.J."/>
            <person name="Nelson W.C."/>
            <person name="Gwinn M.L."/>
            <person name="DeBoy R.T."/>
            <person name="Peterson J.D."/>
            <person name="Hickey E.K."/>
            <person name="Haft D.H."/>
            <person name="Salzberg S.L."/>
            <person name="White O."/>
            <person name="Fleischmann R.D."/>
            <person name="Dougherty B.A."/>
            <person name="Mason T.M."/>
            <person name="Ciecko A."/>
            <person name="Parksey D.S."/>
            <person name="Blair E."/>
            <person name="Cittone H."/>
            <person name="Clark E.B."/>
            <person name="Cotton M.D."/>
            <person name="Utterback T.R."/>
            <person name="Khouri H.M."/>
            <person name="Qin H."/>
            <person name="Vamathevan J.J."/>
            <person name="Gill J."/>
            <person name="Scarlato V."/>
            <person name="Masignani V."/>
            <person name="Pizza M."/>
            <person name="Grandi G."/>
            <person name="Sun L."/>
            <person name="Smith H.O."/>
            <person name="Fraser C.M."/>
            <person name="Moxon E.R."/>
            <person name="Rappuoli R."/>
            <person name="Venter J.C."/>
        </authorList>
    </citation>
    <scope>NUCLEOTIDE SEQUENCE [LARGE SCALE GENOMIC DNA]</scope>
    <source>
        <strain>ATCC BAA-335 / MC58</strain>
    </source>
</reference>
<feature type="chain" id="PRO_0000131560" description="Small ribosomal subunit protein uS5">
    <location>
        <begin position="1"/>
        <end position="172"/>
    </location>
</feature>
<feature type="domain" description="S5 DRBM" evidence="1">
    <location>
        <begin position="13"/>
        <end position="76"/>
    </location>
</feature>
<accession>P66577</accession>
<accession>Q9JQP3</accession>
<evidence type="ECO:0000255" key="1">
    <source>
        <dbReference type="HAMAP-Rule" id="MF_01307"/>
    </source>
</evidence>
<evidence type="ECO:0000305" key="2"/>
<keyword id="KW-1185">Reference proteome</keyword>
<keyword id="KW-0687">Ribonucleoprotein</keyword>
<keyword id="KW-0689">Ribosomal protein</keyword>
<keyword id="KW-0694">RNA-binding</keyword>
<keyword id="KW-0699">rRNA-binding</keyword>
<name>RS5_NEIMB</name>
<gene>
    <name evidence="1" type="primary">rpsE</name>
    <name type="ordered locus">NMB0159</name>
</gene>
<comment type="function">
    <text evidence="1">With S4 and S12 plays an important role in translational accuracy.</text>
</comment>
<comment type="function">
    <text evidence="1">Located at the back of the 30S subunit body where it stabilizes the conformation of the head with respect to the body.</text>
</comment>
<comment type="subunit">
    <text evidence="1">Part of the 30S ribosomal subunit. Contacts proteins S4 and S8.</text>
</comment>
<comment type="domain">
    <text>The N-terminal domain interacts with the head of the 30S subunit; the C-terminal domain interacts with the body and contacts protein S4. The interaction surface between S4 and S5 is involved in control of translational fidelity.</text>
</comment>
<comment type="similarity">
    <text evidence="1">Belongs to the universal ribosomal protein uS5 family.</text>
</comment>
<sequence length="172" mass="18246">MAKHEIEERGDGLIEKMVAVNRVTKVVKGGRIMAFSALTVVGDGDGRIGMGKGKSKEVPVAVQKAMDQARRSMIKVPLKNGTIHHEVIGRHGATKVFMQPAKEGSGVKAGGPMRLVFDAMGIHNISAKVHGSTNPYNIVRATLDGLSKLHTPADIAAKRGLTVEDILGVNHG</sequence>
<organism>
    <name type="scientific">Neisseria meningitidis serogroup B (strain ATCC BAA-335 / MC58)</name>
    <dbReference type="NCBI Taxonomy" id="122586"/>
    <lineage>
        <taxon>Bacteria</taxon>
        <taxon>Pseudomonadati</taxon>
        <taxon>Pseudomonadota</taxon>
        <taxon>Betaproteobacteria</taxon>
        <taxon>Neisseriales</taxon>
        <taxon>Neisseriaceae</taxon>
        <taxon>Neisseria</taxon>
    </lineage>
</organism>